<name>MNME_PROMS</name>
<sequence length="460" mass="51630">MDSIVTTEDTIAAIASAISIGKGGVAIIRVSGKDAINSCKKIVQTKSKYAWESHRVFRGFIQENKQNKFIDEVLILVMKSPNSFTGEDVVELHCHGGIIIVNKVLKILLSNNSRVRLANPGEFSQRAFLNGKIDLTQAESINQLINASNARSAELAFSGVQGEIKKKIDDIKNDLINQLCEIEARVDFEEDFTDFDYTKYLKNIKKVKEKIELLIENAKRNSYIHNGISIALIGKTNVGKSSLLNLLAKKEKAIVTNIPGTTRDVIEVNLTINDIPMKIIDTAGIRETHEQIESIGIKKSFGKIKESDFIIYIYSLEEGFNEEDKKIIQEIPKEKLITILGNKKDLIDCKNINSNELKHTILMSIKNNDGERLLIDTIIKKCGLKQVENINIFLNDRHLTNLSACLSNLNDTDEIIENKLPFDLLSIELRDGIQNLSKITGQELTEELLDNIFSKFCIGK</sequence>
<reference key="1">
    <citation type="journal article" date="2007" name="PLoS Genet.">
        <title>Patterns and implications of gene gain and loss in the evolution of Prochlorococcus.</title>
        <authorList>
            <person name="Kettler G.C."/>
            <person name="Martiny A.C."/>
            <person name="Huang K."/>
            <person name="Zucker J."/>
            <person name="Coleman M.L."/>
            <person name="Rodrigue S."/>
            <person name="Chen F."/>
            <person name="Lapidus A."/>
            <person name="Ferriera S."/>
            <person name="Johnson J."/>
            <person name="Steglich C."/>
            <person name="Church G.M."/>
            <person name="Richardson P."/>
            <person name="Chisholm S.W."/>
        </authorList>
    </citation>
    <scope>NUCLEOTIDE SEQUENCE [LARGE SCALE GENOMIC DNA]</scope>
    <source>
        <strain>AS9601</strain>
    </source>
</reference>
<protein>
    <recommendedName>
        <fullName evidence="1">tRNA modification GTPase MnmE</fullName>
        <ecNumber evidence="1">3.6.-.-</ecNumber>
    </recommendedName>
</protein>
<organism>
    <name type="scientific">Prochlorococcus marinus (strain AS9601)</name>
    <dbReference type="NCBI Taxonomy" id="146891"/>
    <lineage>
        <taxon>Bacteria</taxon>
        <taxon>Bacillati</taxon>
        <taxon>Cyanobacteriota</taxon>
        <taxon>Cyanophyceae</taxon>
        <taxon>Synechococcales</taxon>
        <taxon>Prochlorococcaceae</taxon>
        <taxon>Prochlorococcus</taxon>
    </lineage>
</organism>
<keyword id="KW-0963">Cytoplasm</keyword>
<keyword id="KW-0342">GTP-binding</keyword>
<keyword id="KW-0378">Hydrolase</keyword>
<keyword id="KW-0460">Magnesium</keyword>
<keyword id="KW-0479">Metal-binding</keyword>
<keyword id="KW-0547">Nucleotide-binding</keyword>
<keyword id="KW-0630">Potassium</keyword>
<keyword id="KW-0819">tRNA processing</keyword>
<gene>
    <name evidence="1" type="primary">mnmE</name>
    <name evidence="1" type="synonym">trmE</name>
    <name type="ordered locus">A9601_02071</name>
</gene>
<feature type="chain" id="PRO_1000048850" description="tRNA modification GTPase MnmE">
    <location>
        <begin position="1"/>
        <end position="460"/>
    </location>
</feature>
<feature type="domain" description="TrmE-type G">
    <location>
        <begin position="227"/>
        <end position="383"/>
    </location>
</feature>
<feature type="binding site" evidence="1">
    <location>
        <position position="29"/>
    </location>
    <ligand>
        <name>(6S)-5-formyl-5,6,7,8-tetrahydrofolate</name>
        <dbReference type="ChEBI" id="CHEBI:57457"/>
    </ligand>
</feature>
<feature type="binding site" evidence="1">
    <location>
        <position position="91"/>
    </location>
    <ligand>
        <name>(6S)-5-formyl-5,6,7,8-tetrahydrofolate</name>
        <dbReference type="ChEBI" id="CHEBI:57457"/>
    </ligand>
</feature>
<feature type="binding site" evidence="1">
    <location>
        <position position="132"/>
    </location>
    <ligand>
        <name>(6S)-5-formyl-5,6,7,8-tetrahydrofolate</name>
        <dbReference type="ChEBI" id="CHEBI:57457"/>
    </ligand>
</feature>
<feature type="binding site" evidence="1">
    <location>
        <begin position="237"/>
        <end position="242"/>
    </location>
    <ligand>
        <name>GTP</name>
        <dbReference type="ChEBI" id="CHEBI:37565"/>
    </ligand>
</feature>
<feature type="binding site" evidence="1">
    <location>
        <position position="237"/>
    </location>
    <ligand>
        <name>K(+)</name>
        <dbReference type="ChEBI" id="CHEBI:29103"/>
    </ligand>
</feature>
<feature type="binding site" evidence="1">
    <location>
        <position position="241"/>
    </location>
    <ligand>
        <name>Mg(2+)</name>
        <dbReference type="ChEBI" id="CHEBI:18420"/>
    </ligand>
</feature>
<feature type="binding site" evidence="1">
    <location>
        <begin position="256"/>
        <end position="262"/>
    </location>
    <ligand>
        <name>GTP</name>
        <dbReference type="ChEBI" id="CHEBI:37565"/>
    </ligand>
</feature>
<feature type="binding site" evidence="1">
    <location>
        <position position="256"/>
    </location>
    <ligand>
        <name>K(+)</name>
        <dbReference type="ChEBI" id="CHEBI:29103"/>
    </ligand>
</feature>
<feature type="binding site" evidence="1">
    <location>
        <position position="258"/>
    </location>
    <ligand>
        <name>K(+)</name>
        <dbReference type="ChEBI" id="CHEBI:29103"/>
    </ligand>
</feature>
<feature type="binding site" evidence="1">
    <location>
        <position position="261"/>
    </location>
    <ligand>
        <name>K(+)</name>
        <dbReference type="ChEBI" id="CHEBI:29103"/>
    </ligand>
</feature>
<feature type="binding site" evidence="1">
    <location>
        <position position="262"/>
    </location>
    <ligand>
        <name>Mg(2+)</name>
        <dbReference type="ChEBI" id="CHEBI:18420"/>
    </ligand>
</feature>
<feature type="binding site" evidence="1">
    <location>
        <begin position="281"/>
        <end position="284"/>
    </location>
    <ligand>
        <name>GTP</name>
        <dbReference type="ChEBI" id="CHEBI:37565"/>
    </ligand>
</feature>
<feature type="binding site" evidence="1">
    <location>
        <position position="460"/>
    </location>
    <ligand>
        <name>(6S)-5-formyl-5,6,7,8-tetrahydrofolate</name>
        <dbReference type="ChEBI" id="CHEBI:57457"/>
    </ligand>
</feature>
<proteinExistence type="inferred from homology"/>
<dbReference type="EC" id="3.6.-.-" evidence="1"/>
<dbReference type="EMBL" id="CP000551">
    <property type="protein sequence ID" value="ABM69495.1"/>
    <property type="molecule type" value="Genomic_DNA"/>
</dbReference>
<dbReference type="RefSeq" id="WP_011817682.1">
    <property type="nucleotide sequence ID" value="NC_008816.1"/>
</dbReference>
<dbReference type="SMR" id="A2BNY4"/>
<dbReference type="STRING" id="146891.A9601_02071"/>
<dbReference type="KEGG" id="pmb:A9601_02071"/>
<dbReference type="eggNOG" id="COG0486">
    <property type="taxonomic scope" value="Bacteria"/>
</dbReference>
<dbReference type="HOGENOM" id="CLU_019624_4_1_3"/>
<dbReference type="OrthoDB" id="9805918at2"/>
<dbReference type="Proteomes" id="UP000002590">
    <property type="component" value="Chromosome"/>
</dbReference>
<dbReference type="GO" id="GO:0005829">
    <property type="term" value="C:cytosol"/>
    <property type="evidence" value="ECO:0007669"/>
    <property type="project" value="TreeGrafter"/>
</dbReference>
<dbReference type="GO" id="GO:0005525">
    <property type="term" value="F:GTP binding"/>
    <property type="evidence" value="ECO:0007669"/>
    <property type="project" value="UniProtKB-UniRule"/>
</dbReference>
<dbReference type="GO" id="GO:0003924">
    <property type="term" value="F:GTPase activity"/>
    <property type="evidence" value="ECO:0007669"/>
    <property type="project" value="UniProtKB-UniRule"/>
</dbReference>
<dbReference type="GO" id="GO:0046872">
    <property type="term" value="F:metal ion binding"/>
    <property type="evidence" value="ECO:0007669"/>
    <property type="project" value="UniProtKB-KW"/>
</dbReference>
<dbReference type="GO" id="GO:0030488">
    <property type="term" value="P:tRNA methylation"/>
    <property type="evidence" value="ECO:0007669"/>
    <property type="project" value="TreeGrafter"/>
</dbReference>
<dbReference type="GO" id="GO:0002098">
    <property type="term" value="P:tRNA wobble uridine modification"/>
    <property type="evidence" value="ECO:0007669"/>
    <property type="project" value="TreeGrafter"/>
</dbReference>
<dbReference type="CDD" id="cd04164">
    <property type="entry name" value="trmE"/>
    <property type="match status" value="1"/>
</dbReference>
<dbReference type="CDD" id="cd14858">
    <property type="entry name" value="TrmE_N"/>
    <property type="match status" value="1"/>
</dbReference>
<dbReference type="FunFam" id="3.30.1360.120:FF:000003">
    <property type="entry name" value="tRNA modification GTPase MnmE"/>
    <property type="match status" value="1"/>
</dbReference>
<dbReference type="Gene3D" id="3.40.50.300">
    <property type="entry name" value="P-loop containing nucleotide triphosphate hydrolases"/>
    <property type="match status" value="1"/>
</dbReference>
<dbReference type="Gene3D" id="3.30.1360.120">
    <property type="entry name" value="Probable tRNA modification gtpase trme, domain 1"/>
    <property type="match status" value="1"/>
</dbReference>
<dbReference type="Gene3D" id="1.20.120.430">
    <property type="entry name" value="tRNA modification GTPase MnmE domain 2"/>
    <property type="match status" value="1"/>
</dbReference>
<dbReference type="HAMAP" id="MF_00379">
    <property type="entry name" value="GTPase_MnmE"/>
    <property type="match status" value="1"/>
</dbReference>
<dbReference type="InterPro" id="IPR031168">
    <property type="entry name" value="G_TrmE"/>
</dbReference>
<dbReference type="InterPro" id="IPR006073">
    <property type="entry name" value="GTP-bd"/>
</dbReference>
<dbReference type="InterPro" id="IPR018948">
    <property type="entry name" value="GTP-bd_TrmE_N"/>
</dbReference>
<dbReference type="InterPro" id="IPR004520">
    <property type="entry name" value="GTPase_MnmE"/>
</dbReference>
<dbReference type="InterPro" id="IPR027368">
    <property type="entry name" value="MnmE_dom2"/>
</dbReference>
<dbReference type="InterPro" id="IPR025867">
    <property type="entry name" value="MnmE_helical"/>
</dbReference>
<dbReference type="InterPro" id="IPR027417">
    <property type="entry name" value="P-loop_NTPase"/>
</dbReference>
<dbReference type="InterPro" id="IPR005225">
    <property type="entry name" value="Small_GTP-bd"/>
</dbReference>
<dbReference type="InterPro" id="IPR027266">
    <property type="entry name" value="TrmE/GcvT_dom1"/>
</dbReference>
<dbReference type="NCBIfam" id="TIGR00450">
    <property type="entry name" value="mnmE_trmE_thdF"/>
    <property type="match status" value="1"/>
</dbReference>
<dbReference type="NCBIfam" id="NF003661">
    <property type="entry name" value="PRK05291.1-3"/>
    <property type="match status" value="1"/>
</dbReference>
<dbReference type="NCBIfam" id="TIGR00231">
    <property type="entry name" value="small_GTP"/>
    <property type="match status" value="1"/>
</dbReference>
<dbReference type="PANTHER" id="PTHR42714">
    <property type="entry name" value="TRNA MODIFICATION GTPASE GTPBP3"/>
    <property type="match status" value="1"/>
</dbReference>
<dbReference type="PANTHER" id="PTHR42714:SF2">
    <property type="entry name" value="TRNA MODIFICATION GTPASE GTPBP3, MITOCHONDRIAL"/>
    <property type="match status" value="1"/>
</dbReference>
<dbReference type="Pfam" id="PF01926">
    <property type="entry name" value="MMR_HSR1"/>
    <property type="match status" value="1"/>
</dbReference>
<dbReference type="Pfam" id="PF12631">
    <property type="entry name" value="MnmE_helical"/>
    <property type="match status" value="1"/>
</dbReference>
<dbReference type="Pfam" id="PF10396">
    <property type="entry name" value="TrmE_N"/>
    <property type="match status" value="1"/>
</dbReference>
<dbReference type="PRINTS" id="PR00449">
    <property type="entry name" value="RASTRNSFRMNG"/>
</dbReference>
<dbReference type="SUPFAM" id="SSF52540">
    <property type="entry name" value="P-loop containing nucleoside triphosphate hydrolases"/>
    <property type="match status" value="1"/>
</dbReference>
<dbReference type="SUPFAM" id="SSF116878">
    <property type="entry name" value="TrmE connector domain"/>
    <property type="match status" value="1"/>
</dbReference>
<dbReference type="PROSITE" id="PS51709">
    <property type="entry name" value="G_TRME"/>
    <property type="match status" value="1"/>
</dbReference>
<comment type="function">
    <text evidence="1">Exhibits a very high intrinsic GTPase hydrolysis rate. Involved in the addition of a carboxymethylaminomethyl (cmnm) group at the wobble position (U34) of certain tRNAs, forming tRNA-cmnm(5)s(2)U34.</text>
</comment>
<comment type="cofactor">
    <cofactor evidence="1">
        <name>K(+)</name>
        <dbReference type="ChEBI" id="CHEBI:29103"/>
    </cofactor>
    <text evidence="1">Binds 1 potassium ion per subunit.</text>
</comment>
<comment type="subunit">
    <text evidence="1">Homodimer. Heterotetramer of two MnmE and two MnmG subunits.</text>
</comment>
<comment type="subcellular location">
    <subcellularLocation>
        <location evidence="1">Cytoplasm</location>
    </subcellularLocation>
</comment>
<comment type="similarity">
    <text evidence="1">Belongs to the TRAFAC class TrmE-Era-EngA-EngB-Septin-like GTPase superfamily. TrmE GTPase family.</text>
</comment>
<evidence type="ECO:0000255" key="1">
    <source>
        <dbReference type="HAMAP-Rule" id="MF_00379"/>
    </source>
</evidence>
<accession>A2BNY4</accession>